<evidence type="ECO:0000255" key="1"/>
<evidence type="ECO:0000256" key="2">
    <source>
        <dbReference type="SAM" id="MobiDB-lite"/>
    </source>
</evidence>
<evidence type="ECO:0000312" key="3">
    <source>
        <dbReference type="EMBL" id="EAT37869.1"/>
    </source>
</evidence>
<keyword id="KW-0472">Membrane</keyword>
<keyword id="KW-1185">Reference proteome</keyword>
<keyword id="KW-0812">Transmembrane</keyword>
<keyword id="KW-1133">Transmembrane helix</keyword>
<feature type="chain" id="PRO_0000311705" description="Band 7 protein AAEL010189">
    <location>
        <begin position="1"/>
        <end position="297"/>
    </location>
</feature>
<feature type="transmembrane region" description="Helical" evidence="1">
    <location>
        <begin position="37"/>
        <end position="57"/>
    </location>
</feature>
<feature type="region of interest" description="Disordered" evidence="2">
    <location>
        <begin position="1"/>
        <end position="30"/>
    </location>
</feature>
<feature type="compositionally biased region" description="Polar residues" evidence="2">
    <location>
        <begin position="1"/>
        <end position="13"/>
    </location>
</feature>
<reference evidence="3" key="1">
    <citation type="journal article" date="2007" name="Science">
        <title>Genome sequence of Aedes aegypti, a major arbovirus vector.</title>
        <authorList>
            <person name="Nene V."/>
            <person name="Wortman J.R."/>
            <person name="Lawson D."/>
            <person name="Haas B.J."/>
            <person name="Kodira C.D."/>
            <person name="Tu Z.J."/>
            <person name="Loftus B.J."/>
            <person name="Xi Z."/>
            <person name="Megy K."/>
            <person name="Grabherr M."/>
            <person name="Ren Q."/>
            <person name="Zdobnov E.M."/>
            <person name="Lobo N.F."/>
            <person name="Campbell K.S."/>
            <person name="Brown S.E."/>
            <person name="Bonaldo M.F."/>
            <person name="Zhu J."/>
            <person name="Sinkins S.P."/>
            <person name="Hogenkamp D.G."/>
            <person name="Amedeo P."/>
            <person name="Arensburger P."/>
            <person name="Atkinson P.W."/>
            <person name="Bidwell S.L."/>
            <person name="Biedler J."/>
            <person name="Birney E."/>
            <person name="Bruggner R.V."/>
            <person name="Costas J."/>
            <person name="Coy M.R."/>
            <person name="Crabtree J."/>
            <person name="Crawford M."/>
            <person name="DeBruyn B."/>
            <person name="DeCaprio D."/>
            <person name="Eiglmeier K."/>
            <person name="Eisenstadt E."/>
            <person name="El-Dorry H."/>
            <person name="Gelbart W.M."/>
            <person name="Gomes S.L."/>
            <person name="Hammond M."/>
            <person name="Hannick L.I."/>
            <person name="Hogan J.R."/>
            <person name="Holmes M.H."/>
            <person name="Jaffe D."/>
            <person name="Johnston S.J."/>
            <person name="Kennedy R.C."/>
            <person name="Koo H."/>
            <person name="Kravitz S."/>
            <person name="Kriventseva E.V."/>
            <person name="Kulp D."/>
            <person name="Labutti K."/>
            <person name="Lee E."/>
            <person name="Li S."/>
            <person name="Lovin D.D."/>
            <person name="Mao C."/>
            <person name="Mauceli E."/>
            <person name="Menck C.F."/>
            <person name="Miller J.R."/>
            <person name="Montgomery P."/>
            <person name="Mori A."/>
            <person name="Nascimento A.L."/>
            <person name="Naveira H.F."/>
            <person name="Nusbaum C."/>
            <person name="O'Leary S.B."/>
            <person name="Orvis J."/>
            <person name="Pertea M."/>
            <person name="Quesneville H."/>
            <person name="Reidenbach K.R."/>
            <person name="Rogers Y.-H.C."/>
            <person name="Roth C.W."/>
            <person name="Schneider J.R."/>
            <person name="Schatz M."/>
            <person name="Shumway M."/>
            <person name="Stanke M."/>
            <person name="Stinson E.O."/>
            <person name="Tubio J.M.C."/>
            <person name="Vanzee J.P."/>
            <person name="Verjovski-Almeida S."/>
            <person name="Werner D."/>
            <person name="White O.R."/>
            <person name="Wyder S."/>
            <person name="Zeng Q."/>
            <person name="Zhao Q."/>
            <person name="Zhao Y."/>
            <person name="Hill C.A."/>
            <person name="Raikhel A.S."/>
            <person name="Soares M.B."/>
            <person name="Knudson D.L."/>
            <person name="Lee N.H."/>
            <person name="Galagan J."/>
            <person name="Salzberg S.L."/>
            <person name="Paulsen I.T."/>
            <person name="Dimopoulos G."/>
            <person name="Collins F.H."/>
            <person name="Bruce B."/>
            <person name="Fraser-Liggett C.M."/>
            <person name="Severson D.W."/>
        </authorList>
    </citation>
    <scope>NUCLEOTIDE SEQUENCE [LARGE SCALE GENOMIC DNA]</scope>
    <source>
        <strain>LVPib12</strain>
    </source>
</reference>
<name>BND7A_AEDAE</name>
<comment type="subcellular location">
    <subcellularLocation>
        <location evidence="1">Membrane</location>
        <topology evidence="1">Single-pass membrane protein</topology>
    </subcellularLocation>
</comment>
<comment type="similarity">
    <text evidence="1">Belongs to the band 7/mec-2 family.</text>
</comment>
<proteinExistence type="inferred from homology"/>
<dbReference type="EMBL" id="CH477644">
    <property type="protein sequence ID" value="EAT37869.1"/>
    <property type="molecule type" value="Genomic_DNA"/>
</dbReference>
<dbReference type="RefSeq" id="XP_001660669.1">
    <property type="nucleotide sequence ID" value="XM_001660619.1"/>
</dbReference>
<dbReference type="SMR" id="Q16TM5"/>
<dbReference type="FunCoup" id="Q16TM5">
    <property type="interactions" value="89"/>
</dbReference>
<dbReference type="STRING" id="7159.Q16TM5"/>
<dbReference type="PaxDb" id="7159-AAEL010189-PA"/>
<dbReference type="VEuPathDB" id="VectorBase:AAEL024330"/>
<dbReference type="eggNOG" id="KOG2621">
    <property type="taxonomic scope" value="Eukaryota"/>
</dbReference>
<dbReference type="HOGENOM" id="CLU_024949_3_0_1"/>
<dbReference type="InParanoid" id="Q16TM5"/>
<dbReference type="OMA" id="IQQMVRV"/>
<dbReference type="OrthoDB" id="2105077at2759"/>
<dbReference type="PhylomeDB" id="Q16TM5"/>
<dbReference type="Proteomes" id="UP000008820">
    <property type="component" value="Chromosome 2"/>
</dbReference>
<dbReference type="Proteomes" id="UP000682892">
    <property type="component" value="Unassembled WGS sequence"/>
</dbReference>
<dbReference type="GO" id="GO:0005886">
    <property type="term" value="C:plasma membrane"/>
    <property type="evidence" value="ECO:0007669"/>
    <property type="project" value="InterPro"/>
</dbReference>
<dbReference type="CDD" id="cd03403">
    <property type="entry name" value="SPFH_stomatin"/>
    <property type="match status" value="1"/>
</dbReference>
<dbReference type="FunFam" id="3.30.479.30:FF:000002">
    <property type="entry name" value="band 7 protein AGAP004871"/>
    <property type="match status" value="1"/>
</dbReference>
<dbReference type="Gene3D" id="6.10.250.2090">
    <property type="match status" value="1"/>
</dbReference>
<dbReference type="Gene3D" id="3.30.479.30">
    <property type="entry name" value="Band 7 domain"/>
    <property type="match status" value="1"/>
</dbReference>
<dbReference type="InterPro" id="IPR043202">
    <property type="entry name" value="Band-7_stomatin-like"/>
</dbReference>
<dbReference type="InterPro" id="IPR001107">
    <property type="entry name" value="Band_7"/>
</dbReference>
<dbReference type="InterPro" id="IPR036013">
    <property type="entry name" value="Band_7/SPFH_dom_sf"/>
</dbReference>
<dbReference type="InterPro" id="IPR018080">
    <property type="entry name" value="Band_7/stomatin-like_CS"/>
</dbReference>
<dbReference type="InterPro" id="IPR001972">
    <property type="entry name" value="Stomatin_HflK_fam"/>
</dbReference>
<dbReference type="PANTHER" id="PTHR10264">
    <property type="entry name" value="BAND 7 PROTEIN-RELATED"/>
    <property type="match status" value="1"/>
</dbReference>
<dbReference type="PANTHER" id="PTHR10264:SF127">
    <property type="entry name" value="PODOCIN"/>
    <property type="match status" value="1"/>
</dbReference>
<dbReference type="Pfam" id="PF01145">
    <property type="entry name" value="Band_7"/>
    <property type="match status" value="1"/>
</dbReference>
<dbReference type="PRINTS" id="PR00721">
    <property type="entry name" value="STOMATIN"/>
</dbReference>
<dbReference type="SMART" id="SM00244">
    <property type="entry name" value="PHB"/>
    <property type="match status" value="1"/>
</dbReference>
<dbReference type="SUPFAM" id="SSF117892">
    <property type="entry name" value="Band 7/SPFH domain"/>
    <property type="match status" value="1"/>
</dbReference>
<dbReference type="PROSITE" id="PS01270">
    <property type="entry name" value="BAND_7"/>
    <property type="match status" value="1"/>
</dbReference>
<organism>
    <name type="scientific">Aedes aegypti</name>
    <name type="common">Yellowfever mosquito</name>
    <name type="synonym">Culex aegypti</name>
    <dbReference type="NCBI Taxonomy" id="7159"/>
    <lineage>
        <taxon>Eukaryota</taxon>
        <taxon>Metazoa</taxon>
        <taxon>Ecdysozoa</taxon>
        <taxon>Arthropoda</taxon>
        <taxon>Hexapoda</taxon>
        <taxon>Insecta</taxon>
        <taxon>Pterygota</taxon>
        <taxon>Neoptera</taxon>
        <taxon>Endopterygota</taxon>
        <taxon>Diptera</taxon>
        <taxon>Nematocera</taxon>
        <taxon>Culicoidea</taxon>
        <taxon>Culicidae</taxon>
        <taxon>Culicinae</taxon>
        <taxon>Aedini</taxon>
        <taxon>Aedes</taxon>
        <taxon>Stegomyia</taxon>
    </lineage>
</organism>
<sequence length="297" mass="32713">MGVVESITNSTKPGVTKKSSPEAEDDSNGEASTCGRILIFLSWVLVVLTMPFSLLVCFKVVQEYERAVIFRLGRLVQGGAKGPGIFFILPCIDAYARVDLRTRTYDVPPQEVLTKDSVTVSVDAVVYYRVSNATVSIANVENAHHSTRLLAQTTLRNTMGTRHLHEILSERMTISGSMQLSLDEATEAWGIKVERVEIKDVRLPVQLQRAMAAEAEAAREARAKVIAAEGEQKASRALREASEVIGDSPAALQLRYLQTLNTISAEKNSTIVFPLPIDILTYFMKSKESYEASHSHS</sequence>
<protein>
    <recommendedName>
        <fullName>Band 7 protein AAEL010189</fullName>
    </recommendedName>
</protein>
<gene>
    <name type="ORF">AAEL010189</name>
</gene>
<accession>Q16TM5</accession>